<keyword id="KW-0997">Cell inner membrane</keyword>
<keyword id="KW-1003">Cell membrane</keyword>
<keyword id="KW-0472">Membrane</keyword>
<keyword id="KW-0653">Protein transport</keyword>
<keyword id="KW-0811">Translocation</keyword>
<keyword id="KW-0812">Transmembrane</keyword>
<keyword id="KW-1133">Transmembrane helix</keyword>
<keyword id="KW-0813">Transport</keyword>
<protein>
    <recommendedName>
        <fullName>Sec translocon accessory complex subunit YajC</fullName>
    </recommendedName>
</protein>
<accession>Q9ZJ67</accession>
<gene>
    <name type="primary">yajC</name>
    <name type="ordered locus">jhp_1448</name>
</gene>
<name>YAJC_HELPJ</name>
<proteinExistence type="inferred from homology"/>
<dbReference type="EMBL" id="AE001439">
    <property type="protein sequence ID" value="AAD07025.1"/>
    <property type="molecule type" value="Genomic_DNA"/>
</dbReference>
<dbReference type="PIR" id="C71805">
    <property type="entry name" value="C71805"/>
</dbReference>
<dbReference type="RefSeq" id="WP_000531777.1">
    <property type="nucleotide sequence ID" value="NZ_CP011330.1"/>
</dbReference>
<dbReference type="SMR" id="Q9ZJ67"/>
<dbReference type="KEGG" id="hpj:jhp_1448"/>
<dbReference type="PATRIC" id="fig|85963.30.peg.1095"/>
<dbReference type="eggNOG" id="COG1862">
    <property type="taxonomic scope" value="Bacteria"/>
</dbReference>
<dbReference type="Proteomes" id="UP000000804">
    <property type="component" value="Chromosome"/>
</dbReference>
<dbReference type="GO" id="GO:0005886">
    <property type="term" value="C:plasma membrane"/>
    <property type="evidence" value="ECO:0007669"/>
    <property type="project" value="UniProtKB-SubCell"/>
</dbReference>
<dbReference type="GO" id="GO:0015031">
    <property type="term" value="P:protein transport"/>
    <property type="evidence" value="ECO:0007669"/>
    <property type="project" value="UniProtKB-KW"/>
</dbReference>
<dbReference type="InterPro" id="IPR003849">
    <property type="entry name" value="Preprotein_translocase_YajC"/>
</dbReference>
<dbReference type="NCBIfam" id="TIGR00739">
    <property type="entry name" value="yajC"/>
    <property type="match status" value="1"/>
</dbReference>
<dbReference type="PANTHER" id="PTHR33909">
    <property type="entry name" value="SEC TRANSLOCON ACCESSORY COMPLEX SUBUNIT YAJC"/>
    <property type="match status" value="1"/>
</dbReference>
<dbReference type="PANTHER" id="PTHR33909:SF1">
    <property type="entry name" value="SEC TRANSLOCON ACCESSORY COMPLEX SUBUNIT YAJC"/>
    <property type="match status" value="1"/>
</dbReference>
<dbReference type="Pfam" id="PF02699">
    <property type="entry name" value="YajC"/>
    <property type="match status" value="1"/>
</dbReference>
<dbReference type="PRINTS" id="PR01853">
    <property type="entry name" value="YAJCTRNLCASE"/>
</dbReference>
<dbReference type="SMART" id="SM01323">
    <property type="entry name" value="YajC"/>
    <property type="match status" value="1"/>
</dbReference>
<comment type="function">
    <text evidence="1">The SecYEG-SecDF-YajC-YidC holo-translocon (HTL) protein secretase/insertase is a supercomplex required for protein secretion, insertion of proteins into membranes, and assembly of membrane protein complexes. While the SecYEG complex is essential for assembly of a number of proteins and complexes, the SecDF-YajC-YidC subcomplex facilitates these functions.</text>
</comment>
<comment type="subunit">
    <text evidence="1">Part of the SecDF-YidC-YajC translocase complex. The SecDF-YidC-YajC translocase forms a supercomplex with SecYEG, called the holo-translocon (HTL).</text>
</comment>
<comment type="subcellular location">
    <subcellularLocation>
        <location evidence="3">Cell inner membrane</location>
        <topology evidence="1">Single-pass membrane protein</topology>
    </subcellularLocation>
</comment>
<comment type="similarity">
    <text evidence="3">Belongs to the YajC family.</text>
</comment>
<feature type="chain" id="PRO_0000097033" description="Sec translocon accessory complex subunit YajC">
    <location>
        <begin position="1"/>
        <end position="97"/>
    </location>
</feature>
<feature type="transmembrane region" description="Helical" evidence="2">
    <location>
        <begin position="6"/>
        <end position="26"/>
    </location>
</feature>
<reference key="1">
    <citation type="journal article" date="1999" name="Nature">
        <title>Genomic sequence comparison of two unrelated isolates of the human gastric pathogen Helicobacter pylori.</title>
        <authorList>
            <person name="Alm R.A."/>
            <person name="Ling L.-S.L."/>
            <person name="Moir D.T."/>
            <person name="King B.L."/>
            <person name="Brown E.D."/>
            <person name="Doig P.C."/>
            <person name="Smith D.R."/>
            <person name="Noonan B."/>
            <person name="Guild B.C."/>
            <person name="deJonge B.L."/>
            <person name="Carmel G."/>
            <person name="Tummino P.J."/>
            <person name="Caruso A."/>
            <person name="Uria-Nickelsen M."/>
            <person name="Mills D.M."/>
            <person name="Ives C."/>
            <person name="Gibson R."/>
            <person name="Merberg D."/>
            <person name="Mills S.D."/>
            <person name="Jiang Q."/>
            <person name="Taylor D.E."/>
            <person name="Vovis G.F."/>
            <person name="Trust T.J."/>
        </authorList>
    </citation>
    <scope>NUCLEOTIDE SEQUENCE [LARGE SCALE GENOMIC DNA]</scope>
    <source>
        <strain>J99 / ATCC 700824</strain>
    </source>
</reference>
<sequence length="97" mass="11069">MGQTKEIITTLLPLLVLFLIFYFLIVRPQRQQQKKHKEMIEGLTKGDKIVTQGGLIVEVLKAEANFFSVKLNDDTTAKLSKNYVAFKLDEETTPNNN</sequence>
<evidence type="ECO:0000250" key="1">
    <source>
        <dbReference type="UniProtKB" id="P0ADZ7"/>
    </source>
</evidence>
<evidence type="ECO:0000255" key="2"/>
<evidence type="ECO:0000305" key="3"/>
<organism>
    <name type="scientific">Helicobacter pylori (strain J99 / ATCC 700824)</name>
    <name type="common">Campylobacter pylori J99</name>
    <dbReference type="NCBI Taxonomy" id="85963"/>
    <lineage>
        <taxon>Bacteria</taxon>
        <taxon>Pseudomonadati</taxon>
        <taxon>Campylobacterota</taxon>
        <taxon>Epsilonproteobacteria</taxon>
        <taxon>Campylobacterales</taxon>
        <taxon>Helicobacteraceae</taxon>
        <taxon>Helicobacter</taxon>
    </lineage>
</organism>